<feature type="chain" id="PRO_1000131312" description="ATP-dependent RNA helicase RhlB">
    <location>
        <begin position="1"/>
        <end position="432"/>
    </location>
</feature>
<feature type="domain" description="Helicase ATP-binding" evidence="1">
    <location>
        <begin position="40"/>
        <end position="219"/>
    </location>
</feature>
<feature type="domain" description="Helicase C-terminal" evidence="1">
    <location>
        <begin position="245"/>
        <end position="390"/>
    </location>
</feature>
<feature type="region of interest" description="Disordered" evidence="2">
    <location>
        <begin position="397"/>
        <end position="432"/>
    </location>
</feature>
<feature type="short sequence motif" description="Q motif">
    <location>
        <begin position="9"/>
        <end position="37"/>
    </location>
</feature>
<feature type="short sequence motif" description="DEAD box">
    <location>
        <begin position="165"/>
        <end position="168"/>
    </location>
</feature>
<feature type="compositionally biased region" description="Basic residues" evidence="2">
    <location>
        <begin position="417"/>
        <end position="426"/>
    </location>
</feature>
<feature type="binding site" evidence="1">
    <location>
        <begin position="53"/>
        <end position="60"/>
    </location>
    <ligand>
        <name>ATP</name>
        <dbReference type="ChEBI" id="CHEBI:30616"/>
    </ligand>
</feature>
<proteinExistence type="inferred from homology"/>
<sequence length="432" mass="48620">MKKTHITEQNFADLGLQPQVIDGLNAKGFIKCTPIQAKALPVLLAGQDIAGQAQTGTGKTLAFLTATFNHLLTTPAPEGRKITQPRAIIMAPTRELAIQIFNDAESLIASTGLKAALAYGGERYEKQQQVIEQGVDILIGTTGRIIDFYKQGHIDFKMIQAVVLDEADRMFDLGFIKDIRFIFRRMPAPTERLNMLFSATLSYRVQELAFEHMQEPEHVVVEPEQKTGHRIKEELFYPSNDHKMALLQTLIEEEWPDRAIIFANTKHKCESVWGHLAADKHRVGLLTGDVPQKKRERILEEFTQGNVDILVATDVAARGLHIPQVTHVFNFDLPNEAEDYVHRIGRTGRAGASGNSISFACEEYAINLPAIEEYIEHSIPQSDYDASALLEDLPAPLRLQRRPQQNRRNNNGQRQGGNRKHSRPRQPRNTQS</sequence>
<reference key="1">
    <citation type="submission" date="2008-08" db="EMBL/GenBank/DDBJ databases">
        <title>Complete sequence of Vibrio fischeri strain MJ11.</title>
        <authorList>
            <person name="Mandel M.J."/>
            <person name="Stabb E.V."/>
            <person name="Ruby E.G."/>
            <person name="Ferriera S."/>
            <person name="Johnson J."/>
            <person name="Kravitz S."/>
            <person name="Beeson K."/>
            <person name="Sutton G."/>
            <person name="Rogers Y.-H."/>
            <person name="Friedman R."/>
            <person name="Frazier M."/>
            <person name="Venter J.C."/>
        </authorList>
    </citation>
    <scope>NUCLEOTIDE SEQUENCE [LARGE SCALE GENOMIC DNA]</scope>
    <source>
        <strain>MJ11</strain>
    </source>
</reference>
<accession>B5FF87</accession>
<protein>
    <recommendedName>
        <fullName evidence="1">ATP-dependent RNA helicase RhlB</fullName>
        <ecNumber evidence="1">3.6.4.13</ecNumber>
    </recommendedName>
</protein>
<organism>
    <name type="scientific">Aliivibrio fischeri (strain MJ11)</name>
    <name type="common">Vibrio fischeri</name>
    <dbReference type="NCBI Taxonomy" id="388396"/>
    <lineage>
        <taxon>Bacteria</taxon>
        <taxon>Pseudomonadati</taxon>
        <taxon>Pseudomonadota</taxon>
        <taxon>Gammaproteobacteria</taxon>
        <taxon>Vibrionales</taxon>
        <taxon>Vibrionaceae</taxon>
        <taxon>Aliivibrio</taxon>
    </lineage>
</organism>
<name>RHLB_ALIFM</name>
<keyword id="KW-0067">ATP-binding</keyword>
<keyword id="KW-0963">Cytoplasm</keyword>
<keyword id="KW-0347">Helicase</keyword>
<keyword id="KW-0378">Hydrolase</keyword>
<keyword id="KW-0547">Nucleotide-binding</keyword>
<keyword id="KW-0694">RNA-binding</keyword>
<dbReference type="EC" id="3.6.4.13" evidence="1"/>
<dbReference type="EMBL" id="CP001139">
    <property type="protein sequence ID" value="ACH65016.1"/>
    <property type="molecule type" value="Genomic_DNA"/>
</dbReference>
<dbReference type="RefSeq" id="WP_012532773.1">
    <property type="nucleotide sequence ID" value="NC_011184.1"/>
</dbReference>
<dbReference type="SMR" id="B5FF87"/>
<dbReference type="KEGG" id="vfm:VFMJ11_0054"/>
<dbReference type="HOGENOM" id="CLU_003041_28_3_6"/>
<dbReference type="Proteomes" id="UP000001857">
    <property type="component" value="Chromosome I"/>
</dbReference>
<dbReference type="GO" id="GO:0005829">
    <property type="term" value="C:cytosol"/>
    <property type="evidence" value="ECO:0007669"/>
    <property type="project" value="TreeGrafter"/>
</dbReference>
<dbReference type="GO" id="GO:0005524">
    <property type="term" value="F:ATP binding"/>
    <property type="evidence" value="ECO:0007669"/>
    <property type="project" value="UniProtKB-UniRule"/>
</dbReference>
<dbReference type="GO" id="GO:0016887">
    <property type="term" value="F:ATP hydrolysis activity"/>
    <property type="evidence" value="ECO:0007669"/>
    <property type="project" value="RHEA"/>
</dbReference>
<dbReference type="GO" id="GO:0003723">
    <property type="term" value="F:RNA binding"/>
    <property type="evidence" value="ECO:0007669"/>
    <property type="project" value="UniProtKB-UniRule"/>
</dbReference>
<dbReference type="GO" id="GO:0003724">
    <property type="term" value="F:RNA helicase activity"/>
    <property type="evidence" value="ECO:0007669"/>
    <property type="project" value="UniProtKB-UniRule"/>
</dbReference>
<dbReference type="GO" id="GO:0006401">
    <property type="term" value="P:RNA catabolic process"/>
    <property type="evidence" value="ECO:0007669"/>
    <property type="project" value="UniProtKB-UniRule"/>
</dbReference>
<dbReference type="CDD" id="cd00268">
    <property type="entry name" value="DEADc"/>
    <property type="match status" value="1"/>
</dbReference>
<dbReference type="CDD" id="cd18787">
    <property type="entry name" value="SF2_C_DEAD"/>
    <property type="match status" value="1"/>
</dbReference>
<dbReference type="FunFam" id="3.40.50.300:FF:000008">
    <property type="entry name" value="ATP-dependent RNA helicase RhlB"/>
    <property type="match status" value="1"/>
</dbReference>
<dbReference type="FunFam" id="3.40.50.300:FF:000312">
    <property type="entry name" value="ATP-dependent RNA helicase RhlB"/>
    <property type="match status" value="1"/>
</dbReference>
<dbReference type="Gene3D" id="3.40.50.300">
    <property type="entry name" value="P-loop containing nucleotide triphosphate hydrolases"/>
    <property type="match status" value="2"/>
</dbReference>
<dbReference type="HAMAP" id="MF_00661">
    <property type="entry name" value="DEAD_helicase_RhlB"/>
    <property type="match status" value="1"/>
</dbReference>
<dbReference type="InterPro" id="IPR011545">
    <property type="entry name" value="DEAD/DEAH_box_helicase_dom"/>
</dbReference>
<dbReference type="InterPro" id="IPR050079">
    <property type="entry name" value="DEAD_box_RNA_helicase"/>
</dbReference>
<dbReference type="InterPro" id="IPR014001">
    <property type="entry name" value="Helicase_ATP-bd"/>
</dbReference>
<dbReference type="InterPro" id="IPR001650">
    <property type="entry name" value="Helicase_C-like"/>
</dbReference>
<dbReference type="InterPro" id="IPR027417">
    <property type="entry name" value="P-loop_NTPase"/>
</dbReference>
<dbReference type="InterPro" id="IPR000629">
    <property type="entry name" value="RNA-helicase_DEAD-box_CS"/>
</dbReference>
<dbReference type="InterPro" id="IPR023554">
    <property type="entry name" value="RNA_helicase_ATP-dep_RhlB"/>
</dbReference>
<dbReference type="InterPro" id="IPR014014">
    <property type="entry name" value="RNA_helicase_DEAD_Q_motif"/>
</dbReference>
<dbReference type="NCBIfam" id="NF003419">
    <property type="entry name" value="PRK04837.1"/>
    <property type="match status" value="1"/>
</dbReference>
<dbReference type="PANTHER" id="PTHR47959:SF10">
    <property type="entry name" value="ATP-DEPENDENT RNA HELICASE RHLB"/>
    <property type="match status" value="1"/>
</dbReference>
<dbReference type="PANTHER" id="PTHR47959">
    <property type="entry name" value="ATP-DEPENDENT RNA HELICASE RHLE-RELATED"/>
    <property type="match status" value="1"/>
</dbReference>
<dbReference type="Pfam" id="PF00270">
    <property type="entry name" value="DEAD"/>
    <property type="match status" value="1"/>
</dbReference>
<dbReference type="Pfam" id="PF00271">
    <property type="entry name" value="Helicase_C"/>
    <property type="match status" value="1"/>
</dbReference>
<dbReference type="SMART" id="SM00487">
    <property type="entry name" value="DEXDc"/>
    <property type="match status" value="1"/>
</dbReference>
<dbReference type="SMART" id="SM00490">
    <property type="entry name" value="HELICc"/>
    <property type="match status" value="1"/>
</dbReference>
<dbReference type="SUPFAM" id="SSF52540">
    <property type="entry name" value="P-loop containing nucleoside triphosphate hydrolases"/>
    <property type="match status" value="1"/>
</dbReference>
<dbReference type="PROSITE" id="PS00039">
    <property type="entry name" value="DEAD_ATP_HELICASE"/>
    <property type="match status" value="1"/>
</dbReference>
<dbReference type="PROSITE" id="PS51192">
    <property type="entry name" value="HELICASE_ATP_BIND_1"/>
    <property type="match status" value="1"/>
</dbReference>
<dbReference type="PROSITE" id="PS51194">
    <property type="entry name" value="HELICASE_CTER"/>
    <property type="match status" value="1"/>
</dbReference>
<dbReference type="PROSITE" id="PS51195">
    <property type="entry name" value="Q_MOTIF"/>
    <property type="match status" value="1"/>
</dbReference>
<comment type="function">
    <text evidence="1">DEAD-box RNA helicase involved in RNA degradation. Has RNA-dependent ATPase activity and unwinds double-stranded RNA.</text>
</comment>
<comment type="catalytic activity">
    <reaction evidence="1">
        <text>ATP + H2O = ADP + phosphate + H(+)</text>
        <dbReference type="Rhea" id="RHEA:13065"/>
        <dbReference type="ChEBI" id="CHEBI:15377"/>
        <dbReference type="ChEBI" id="CHEBI:15378"/>
        <dbReference type="ChEBI" id="CHEBI:30616"/>
        <dbReference type="ChEBI" id="CHEBI:43474"/>
        <dbReference type="ChEBI" id="CHEBI:456216"/>
        <dbReference type="EC" id="3.6.4.13"/>
    </reaction>
</comment>
<comment type="subunit">
    <text evidence="1">Component of the RNA degradosome, which is a multiprotein complex involved in RNA processing and mRNA degradation.</text>
</comment>
<comment type="subcellular location">
    <subcellularLocation>
        <location evidence="1">Cytoplasm</location>
    </subcellularLocation>
</comment>
<comment type="similarity">
    <text evidence="1">Belongs to the DEAD box helicase family. RhlB subfamily.</text>
</comment>
<gene>
    <name evidence="1" type="primary">rhlB</name>
    <name type="ordered locus">VFMJ11_0054</name>
</gene>
<evidence type="ECO:0000255" key="1">
    <source>
        <dbReference type="HAMAP-Rule" id="MF_00661"/>
    </source>
</evidence>
<evidence type="ECO:0000256" key="2">
    <source>
        <dbReference type="SAM" id="MobiDB-lite"/>
    </source>
</evidence>